<name>KDSB_XYLF2</name>
<keyword id="KW-0963">Cytoplasm</keyword>
<keyword id="KW-0448">Lipopolysaccharide biosynthesis</keyword>
<keyword id="KW-0548">Nucleotidyltransferase</keyword>
<keyword id="KW-0808">Transferase</keyword>
<accession>B2I6C4</accession>
<organism>
    <name type="scientific">Xylella fastidiosa (strain M23)</name>
    <dbReference type="NCBI Taxonomy" id="405441"/>
    <lineage>
        <taxon>Bacteria</taxon>
        <taxon>Pseudomonadati</taxon>
        <taxon>Pseudomonadota</taxon>
        <taxon>Gammaproteobacteria</taxon>
        <taxon>Lysobacterales</taxon>
        <taxon>Lysobacteraceae</taxon>
        <taxon>Xylella</taxon>
    </lineage>
</organism>
<dbReference type="EC" id="2.7.7.38" evidence="1"/>
<dbReference type="EMBL" id="CP001011">
    <property type="protein sequence ID" value="ACB92834.1"/>
    <property type="molecule type" value="Genomic_DNA"/>
</dbReference>
<dbReference type="RefSeq" id="WP_004089528.1">
    <property type="nucleotide sequence ID" value="NC_010577.1"/>
</dbReference>
<dbReference type="SMR" id="B2I6C4"/>
<dbReference type="GeneID" id="93905154"/>
<dbReference type="KEGG" id="xfn:XfasM23_1421"/>
<dbReference type="HOGENOM" id="CLU_065038_1_0_6"/>
<dbReference type="UniPathway" id="UPA00030"/>
<dbReference type="UniPathway" id="UPA00358">
    <property type="reaction ID" value="UER00476"/>
</dbReference>
<dbReference type="Proteomes" id="UP000001698">
    <property type="component" value="Chromosome"/>
</dbReference>
<dbReference type="GO" id="GO:0005829">
    <property type="term" value="C:cytosol"/>
    <property type="evidence" value="ECO:0007669"/>
    <property type="project" value="TreeGrafter"/>
</dbReference>
<dbReference type="GO" id="GO:0008690">
    <property type="term" value="F:3-deoxy-manno-octulosonate cytidylyltransferase activity"/>
    <property type="evidence" value="ECO:0007669"/>
    <property type="project" value="UniProtKB-UniRule"/>
</dbReference>
<dbReference type="GO" id="GO:0033468">
    <property type="term" value="P:CMP-keto-3-deoxy-D-manno-octulosonic acid biosynthetic process"/>
    <property type="evidence" value="ECO:0007669"/>
    <property type="project" value="UniProtKB-UniRule"/>
</dbReference>
<dbReference type="GO" id="GO:0009103">
    <property type="term" value="P:lipopolysaccharide biosynthetic process"/>
    <property type="evidence" value="ECO:0007669"/>
    <property type="project" value="UniProtKB-UniRule"/>
</dbReference>
<dbReference type="CDD" id="cd02517">
    <property type="entry name" value="CMP-KDO-Synthetase"/>
    <property type="match status" value="1"/>
</dbReference>
<dbReference type="FunFam" id="3.90.550.10:FF:000011">
    <property type="entry name" value="3-deoxy-manno-octulosonate cytidylyltransferase"/>
    <property type="match status" value="1"/>
</dbReference>
<dbReference type="Gene3D" id="3.90.550.10">
    <property type="entry name" value="Spore Coat Polysaccharide Biosynthesis Protein SpsA, Chain A"/>
    <property type="match status" value="1"/>
</dbReference>
<dbReference type="HAMAP" id="MF_00057">
    <property type="entry name" value="KdsB"/>
    <property type="match status" value="1"/>
</dbReference>
<dbReference type="InterPro" id="IPR003329">
    <property type="entry name" value="Cytidylyl_trans"/>
</dbReference>
<dbReference type="InterPro" id="IPR004528">
    <property type="entry name" value="KdsB"/>
</dbReference>
<dbReference type="InterPro" id="IPR029044">
    <property type="entry name" value="Nucleotide-diphossugar_trans"/>
</dbReference>
<dbReference type="NCBIfam" id="TIGR00466">
    <property type="entry name" value="kdsB"/>
    <property type="match status" value="1"/>
</dbReference>
<dbReference type="NCBIfam" id="NF003952">
    <property type="entry name" value="PRK05450.1-5"/>
    <property type="match status" value="1"/>
</dbReference>
<dbReference type="PANTHER" id="PTHR42866">
    <property type="entry name" value="3-DEOXY-MANNO-OCTULOSONATE CYTIDYLYLTRANSFERASE"/>
    <property type="match status" value="1"/>
</dbReference>
<dbReference type="PANTHER" id="PTHR42866:SF2">
    <property type="entry name" value="3-DEOXY-MANNO-OCTULOSONATE CYTIDYLYLTRANSFERASE, MITOCHONDRIAL"/>
    <property type="match status" value="1"/>
</dbReference>
<dbReference type="Pfam" id="PF02348">
    <property type="entry name" value="CTP_transf_3"/>
    <property type="match status" value="1"/>
</dbReference>
<dbReference type="SUPFAM" id="SSF53448">
    <property type="entry name" value="Nucleotide-diphospho-sugar transferases"/>
    <property type="match status" value="1"/>
</dbReference>
<reference key="1">
    <citation type="journal article" date="2010" name="J. Bacteriol.">
        <title>Whole genome sequences of two Xylella fastidiosa strains (M12 and M23) causing almond leaf scorch disease in California.</title>
        <authorList>
            <person name="Chen J."/>
            <person name="Xie G."/>
            <person name="Han S."/>
            <person name="Chertkov O."/>
            <person name="Sims D."/>
            <person name="Civerolo E.L."/>
        </authorList>
    </citation>
    <scope>NUCLEOTIDE SEQUENCE [LARGE SCALE GENOMIC DNA]</scope>
    <source>
        <strain>M23</strain>
    </source>
</reference>
<protein>
    <recommendedName>
        <fullName evidence="1">3-deoxy-manno-octulosonate cytidylyltransferase</fullName>
        <ecNumber evidence="1">2.7.7.38</ecNumber>
    </recommendedName>
    <alternativeName>
        <fullName evidence="1">CMP-2-keto-3-deoxyoctulosonic acid synthase</fullName>
        <shortName evidence="1">CKS</shortName>
        <shortName evidence="1">CMP-KDO synthase</shortName>
    </alternativeName>
</protein>
<comment type="function">
    <text evidence="1">Activates KDO (a required 8-carbon sugar) for incorporation into bacterial lipopolysaccharide in Gram-negative bacteria.</text>
</comment>
<comment type="catalytic activity">
    <reaction evidence="1">
        <text>3-deoxy-alpha-D-manno-oct-2-ulosonate + CTP = CMP-3-deoxy-beta-D-manno-octulosonate + diphosphate</text>
        <dbReference type="Rhea" id="RHEA:23448"/>
        <dbReference type="ChEBI" id="CHEBI:33019"/>
        <dbReference type="ChEBI" id="CHEBI:37563"/>
        <dbReference type="ChEBI" id="CHEBI:85986"/>
        <dbReference type="ChEBI" id="CHEBI:85987"/>
        <dbReference type="EC" id="2.7.7.38"/>
    </reaction>
</comment>
<comment type="pathway">
    <text evidence="1">Nucleotide-sugar biosynthesis; CMP-3-deoxy-D-manno-octulosonate biosynthesis; CMP-3-deoxy-D-manno-octulosonate from 3-deoxy-D-manno-octulosonate and CTP: step 1/1.</text>
</comment>
<comment type="pathway">
    <text evidence="1">Bacterial outer membrane biogenesis; lipopolysaccharide biosynthesis.</text>
</comment>
<comment type="subcellular location">
    <subcellularLocation>
        <location evidence="1">Cytoplasm</location>
    </subcellularLocation>
</comment>
<comment type="similarity">
    <text evidence="1">Belongs to the KdsB family.</text>
</comment>
<sequence>MSLEIVPFVVAIPARFSASRLPGKPLRLLGGRPLIHRVAERALSTGAREVWVATDDVRIAEAVASLDGVHVAMTANTHLSGSDRLAECARIAGWDPEVCVVNLQGDEPFAPAAGIRAVAALLHHSNADMATLATTIDKSEDLFNPNIVKLVCNTHGEALYFSRAPIPWNRDTFATTREPTPLGPWLRHIGLYACNAGFLQRFTTMQPGTLEQIESLEQLRVLEAGHRIAVRITPEHFPPGIDTPEDLAKAEKALEDV</sequence>
<evidence type="ECO:0000255" key="1">
    <source>
        <dbReference type="HAMAP-Rule" id="MF_00057"/>
    </source>
</evidence>
<feature type="chain" id="PRO_0000370178" description="3-deoxy-manno-octulosonate cytidylyltransferase">
    <location>
        <begin position="1"/>
        <end position="257"/>
    </location>
</feature>
<gene>
    <name evidence="1" type="primary">kdsB</name>
    <name type="ordered locus">XfasM23_1421</name>
</gene>
<proteinExistence type="inferred from homology"/>